<sequence>MTDQTTRLPVRRALISVSDKTGILEFARELQQLGVEILSTGGTYKLLKDNGVNAVEVADYTGFAEMMDGRVKTLHPKIHGGILGRRGTDDAIMNEHGIKPIDLVAVNLYPFEATISKPGCDLPTAIENIDIGGPTMVRSAAKNHKDVAIVVNASDYAGIVEGLKAGGLTYAQRFDLMLKAFEHTAAYDGMIANYMGTIDQAKDTLSTEARSEFPRTFNSQFVKAQEMRYGENPHQSAAFYVEAKKGEASISTAVQLQGKELSFNNVADTDAALECVKSFVKPACVIVKHANPCGVAVVPEDEGGIRKAYDLAYATDTESAFGGIIAFNRELDGETAKAIVDRQFVEVIIAPKISQAARDVVAAKQNVRLLECGEWPAERAAGWDFKRVNGGLLVQSRDIGMITADDLKIVTKRAPTEQEIHDLVFAWKVAKFVKSNAIVYAKQRQTIGVGAGQMSRVNSARIAAIKAEHAGLQVQGAVMASDAFFPFRDGIDNAAKVGISAVIQPGGSMRDAEVIAAADEAGIAMVFTGMRHFRH</sequence>
<organism>
    <name type="scientific">Pseudomonas putida (strain ATCC 700007 / DSM 6899 / JCM 31910 / BCRC 17059 / LMG 24140 / F1)</name>
    <dbReference type="NCBI Taxonomy" id="351746"/>
    <lineage>
        <taxon>Bacteria</taxon>
        <taxon>Pseudomonadati</taxon>
        <taxon>Pseudomonadota</taxon>
        <taxon>Gammaproteobacteria</taxon>
        <taxon>Pseudomonadales</taxon>
        <taxon>Pseudomonadaceae</taxon>
        <taxon>Pseudomonas</taxon>
    </lineage>
</organism>
<name>PUR9_PSEP1</name>
<gene>
    <name evidence="1" type="primary">purH</name>
    <name type="ordered locus">Pput_4697</name>
</gene>
<reference key="1">
    <citation type="submission" date="2007-05" db="EMBL/GenBank/DDBJ databases">
        <title>Complete sequence of Pseudomonas putida F1.</title>
        <authorList>
            <consortium name="US DOE Joint Genome Institute"/>
            <person name="Copeland A."/>
            <person name="Lucas S."/>
            <person name="Lapidus A."/>
            <person name="Barry K."/>
            <person name="Detter J.C."/>
            <person name="Glavina del Rio T."/>
            <person name="Hammon N."/>
            <person name="Israni S."/>
            <person name="Dalin E."/>
            <person name="Tice H."/>
            <person name="Pitluck S."/>
            <person name="Chain P."/>
            <person name="Malfatti S."/>
            <person name="Shin M."/>
            <person name="Vergez L."/>
            <person name="Schmutz J."/>
            <person name="Larimer F."/>
            <person name="Land M."/>
            <person name="Hauser L."/>
            <person name="Kyrpides N."/>
            <person name="Lykidis A."/>
            <person name="Parales R."/>
            <person name="Richardson P."/>
        </authorList>
    </citation>
    <scope>NUCLEOTIDE SEQUENCE [LARGE SCALE GENOMIC DNA]</scope>
    <source>
        <strain>ATCC 700007 / DSM 6899 / JCM 31910 / BCRC 17059 / LMG 24140 / F1</strain>
    </source>
</reference>
<proteinExistence type="inferred from homology"/>
<comment type="catalytic activity">
    <reaction evidence="1">
        <text>(6R)-10-formyltetrahydrofolate + 5-amino-1-(5-phospho-beta-D-ribosyl)imidazole-4-carboxamide = 5-formamido-1-(5-phospho-D-ribosyl)imidazole-4-carboxamide + (6S)-5,6,7,8-tetrahydrofolate</text>
        <dbReference type="Rhea" id="RHEA:22192"/>
        <dbReference type="ChEBI" id="CHEBI:57453"/>
        <dbReference type="ChEBI" id="CHEBI:58467"/>
        <dbReference type="ChEBI" id="CHEBI:58475"/>
        <dbReference type="ChEBI" id="CHEBI:195366"/>
        <dbReference type="EC" id="2.1.2.3"/>
    </reaction>
</comment>
<comment type="catalytic activity">
    <reaction evidence="1">
        <text>IMP + H2O = 5-formamido-1-(5-phospho-D-ribosyl)imidazole-4-carboxamide</text>
        <dbReference type="Rhea" id="RHEA:18445"/>
        <dbReference type="ChEBI" id="CHEBI:15377"/>
        <dbReference type="ChEBI" id="CHEBI:58053"/>
        <dbReference type="ChEBI" id="CHEBI:58467"/>
        <dbReference type="EC" id="3.5.4.10"/>
    </reaction>
</comment>
<comment type="pathway">
    <text evidence="1">Purine metabolism; IMP biosynthesis via de novo pathway; 5-formamido-1-(5-phospho-D-ribosyl)imidazole-4-carboxamide from 5-amino-1-(5-phospho-D-ribosyl)imidazole-4-carboxamide (10-formyl THF route): step 1/1.</text>
</comment>
<comment type="pathway">
    <text evidence="1">Purine metabolism; IMP biosynthesis via de novo pathway; IMP from 5-formamido-1-(5-phospho-D-ribosyl)imidazole-4-carboxamide: step 1/1.</text>
</comment>
<comment type="domain">
    <text evidence="1">The IMP cyclohydrolase activity resides in the N-terminal region.</text>
</comment>
<comment type="similarity">
    <text evidence="1">Belongs to the PurH family.</text>
</comment>
<accession>A5W9K7</accession>
<dbReference type="EC" id="2.1.2.3" evidence="1"/>
<dbReference type="EC" id="3.5.4.10" evidence="1"/>
<dbReference type="EMBL" id="CP000712">
    <property type="protein sequence ID" value="ABQ80817.1"/>
    <property type="molecule type" value="Genomic_DNA"/>
</dbReference>
<dbReference type="SMR" id="A5W9K7"/>
<dbReference type="KEGG" id="ppf:Pput_4697"/>
<dbReference type="eggNOG" id="COG0138">
    <property type="taxonomic scope" value="Bacteria"/>
</dbReference>
<dbReference type="HOGENOM" id="CLU_016316_5_2_6"/>
<dbReference type="UniPathway" id="UPA00074">
    <property type="reaction ID" value="UER00133"/>
</dbReference>
<dbReference type="UniPathway" id="UPA00074">
    <property type="reaction ID" value="UER00135"/>
</dbReference>
<dbReference type="GO" id="GO:0005829">
    <property type="term" value="C:cytosol"/>
    <property type="evidence" value="ECO:0007669"/>
    <property type="project" value="TreeGrafter"/>
</dbReference>
<dbReference type="GO" id="GO:0003937">
    <property type="term" value="F:IMP cyclohydrolase activity"/>
    <property type="evidence" value="ECO:0007669"/>
    <property type="project" value="UniProtKB-UniRule"/>
</dbReference>
<dbReference type="GO" id="GO:0004643">
    <property type="term" value="F:phosphoribosylaminoimidazolecarboxamide formyltransferase activity"/>
    <property type="evidence" value="ECO:0007669"/>
    <property type="project" value="UniProtKB-UniRule"/>
</dbReference>
<dbReference type="GO" id="GO:0006189">
    <property type="term" value="P:'de novo' IMP biosynthetic process"/>
    <property type="evidence" value="ECO:0007669"/>
    <property type="project" value="UniProtKB-UniRule"/>
</dbReference>
<dbReference type="CDD" id="cd01421">
    <property type="entry name" value="IMPCH"/>
    <property type="match status" value="1"/>
</dbReference>
<dbReference type="FunFam" id="3.40.140.20:FF:000001">
    <property type="entry name" value="Bifunctional purine biosynthesis protein PurH"/>
    <property type="match status" value="1"/>
</dbReference>
<dbReference type="FunFam" id="3.40.140.20:FF:000002">
    <property type="entry name" value="Bifunctional purine biosynthesis protein PurH"/>
    <property type="match status" value="1"/>
</dbReference>
<dbReference type="FunFam" id="3.40.50.1380:FF:000001">
    <property type="entry name" value="Bifunctional purine biosynthesis protein PurH"/>
    <property type="match status" value="1"/>
</dbReference>
<dbReference type="Gene3D" id="3.40.140.20">
    <property type="match status" value="2"/>
</dbReference>
<dbReference type="Gene3D" id="3.40.50.1380">
    <property type="entry name" value="Methylglyoxal synthase-like domain"/>
    <property type="match status" value="1"/>
</dbReference>
<dbReference type="HAMAP" id="MF_00139">
    <property type="entry name" value="PurH"/>
    <property type="match status" value="1"/>
</dbReference>
<dbReference type="InterPro" id="IPR024051">
    <property type="entry name" value="AICAR_Tfase_dup_dom_sf"/>
</dbReference>
<dbReference type="InterPro" id="IPR016193">
    <property type="entry name" value="Cytidine_deaminase-like"/>
</dbReference>
<dbReference type="InterPro" id="IPR011607">
    <property type="entry name" value="MGS-like_dom"/>
</dbReference>
<dbReference type="InterPro" id="IPR036914">
    <property type="entry name" value="MGS-like_dom_sf"/>
</dbReference>
<dbReference type="InterPro" id="IPR002695">
    <property type="entry name" value="PurH-like"/>
</dbReference>
<dbReference type="NCBIfam" id="NF002049">
    <property type="entry name" value="PRK00881.1"/>
    <property type="match status" value="1"/>
</dbReference>
<dbReference type="NCBIfam" id="TIGR00355">
    <property type="entry name" value="purH"/>
    <property type="match status" value="1"/>
</dbReference>
<dbReference type="PANTHER" id="PTHR11692:SF0">
    <property type="entry name" value="BIFUNCTIONAL PURINE BIOSYNTHESIS PROTEIN ATIC"/>
    <property type="match status" value="1"/>
</dbReference>
<dbReference type="PANTHER" id="PTHR11692">
    <property type="entry name" value="BIFUNCTIONAL PURINE BIOSYNTHESIS PROTEIN PURH"/>
    <property type="match status" value="1"/>
</dbReference>
<dbReference type="Pfam" id="PF01808">
    <property type="entry name" value="AICARFT_IMPCHas"/>
    <property type="match status" value="1"/>
</dbReference>
<dbReference type="Pfam" id="PF02142">
    <property type="entry name" value="MGS"/>
    <property type="match status" value="1"/>
</dbReference>
<dbReference type="PIRSF" id="PIRSF000414">
    <property type="entry name" value="AICARFT_IMPCHas"/>
    <property type="match status" value="1"/>
</dbReference>
<dbReference type="SMART" id="SM00798">
    <property type="entry name" value="AICARFT_IMPCHas"/>
    <property type="match status" value="1"/>
</dbReference>
<dbReference type="SMART" id="SM00851">
    <property type="entry name" value="MGS"/>
    <property type="match status" value="1"/>
</dbReference>
<dbReference type="SUPFAM" id="SSF53927">
    <property type="entry name" value="Cytidine deaminase-like"/>
    <property type="match status" value="1"/>
</dbReference>
<dbReference type="SUPFAM" id="SSF52335">
    <property type="entry name" value="Methylglyoxal synthase-like"/>
    <property type="match status" value="1"/>
</dbReference>
<dbReference type="PROSITE" id="PS51855">
    <property type="entry name" value="MGS"/>
    <property type="match status" value="1"/>
</dbReference>
<protein>
    <recommendedName>
        <fullName evidence="1">Bifunctional purine biosynthesis protein PurH</fullName>
    </recommendedName>
    <domain>
        <recommendedName>
            <fullName evidence="1">Phosphoribosylaminoimidazolecarboxamide formyltransferase</fullName>
            <ecNumber evidence="1">2.1.2.3</ecNumber>
        </recommendedName>
        <alternativeName>
            <fullName evidence="1">AICAR transformylase</fullName>
        </alternativeName>
    </domain>
    <domain>
        <recommendedName>
            <fullName evidence="1">IMP cyclohydrolase</fullName>
            <ecNumber evidence="1">3.5.4.10</ecNumber>
        </recommendedName>
        <alternativeName>
            <fullName evidence="1">ATIC</fullName>
        </alternativeName>
        <alternativeName>
            <fullName evidence="1">IMP synthase</fullName>
        </alternativeName>
        <alternativeName>
            <fullName evidence="1">Inosinicase</fullName>
        </alternativeName>
    </domain>
</protein>
<keyword id="KW-0378">Hydrolase</keyword>
<keyword id="KW-0511">Multifunctional enzyme</keyword>
<keyword id="KW-0658">Purine biosynthesis</keyword>
<keyword id="KW-0808">Transferase</keyword>
<feature type="chain" id="PRO_1000018941" description="Bifunctional purine biosynthesis protein PurH">
    <location>
        <begin position="1"/>
        <end position="535"/>
    </location>
</feature>
<feature type="domain" description="MGS-like" evidence="2">
    <location>
        <begin position="6"/>
        <end position="151"/>
    </location>
</feature>
<evidence type="ECO:0000255" key="1">
    <source>
        <dbReference type="HAMAP-Rule" id="MF_00139"/>
    </source>
</evidence>
<evidence type="ECO:0000255" key="2">
    <source>
        <dbReference type="PROSITE-ProRule" id="PRU01202"/>
    </source>
</evidence>